<dbReference type="EC" id="3.4.11.-" evidence="1"/>
<dbReference type="EMBL" id="CP000438">
    <property type="protein sequence ID" value="ABJ12496.1"/>
    <property type="molecule type" value="Genomic_DNA"/>
</dbReference>
<dbReference type="RefSeq" id="WP_003091583.1">
    <property type="nucleotide sequence ID" value="NZ_CP034244.1"/>
</dbReference>
<dbReference type="SMR" id="Q02Q78"/>
<dbReference type="KEGG" id="pau:PA14_21990"/>
<dbReference type="PseudoCAP" id="PA14_21990"/>
<dbReference type="HOGENOM" id="CLU_019532_2_0_6"/>
<dbReference type="BioCyc" id="PAER208963:G1G74-1827-MONOMER"/>
<dbReference type="Proteomes" id="UP000000653">
    <property type="component" value="Chromosome"/>
</dbReference>
<dbReference type="GO" id="GO:0005737">
    <property type="term" value="C:cytoplasm"/>
    <property type="evidence" value="ECO:0007669"/>
    <property type="project" value="UniProtKB-ARBA"/>
</dbReference>
<dbReference type="GO" id="GO:0004177">
    <property type="term" value="F:aminopeptidase activity"/>
    <property type="evidence" value="ECO:0007669"/>
    <property type="project" value="UniProtKB-UniRule"/>
</dbReference>
<dbReference type="GO" id="GO:0008237">
    <property type="term" value="F:metallopeptidase activity"/>
    <property type="evidence" value="ECO:0007669"/>
    <property type="project" value="UniProtKB-UniRule"/>
</dbReference>
<dbReference type="GO" id="GO:0008270">
    <property type="term" value="F:zinc ion binding"/>
    <property type="evidence" value="ECO:0007669"/>
    <property type="project" value="UniProtKB-UniRule"/>
</dbReference>
<dbReference type="GO" id="GO:0006508">
    <property type="term" value="P:proteolysis"/>
    <property type="evidence" value="ECO:0007669"/>
    <property type="project" value="UniProtKB-UniRule"/>
</dbReference>
<dbReference type="CDD" id="cd05639">
    <property type="entry name" value="M18"/>
    <property type="match status" value="1"/>
</dbReference>
<dbReference type="FunFam" id="2.30.250.10:FF:000003">
    <property type="entry name" value="Probable M18 family aminopeptidase 2"/>
    <property type="match status" value="1"/>
</dbReference>
<dbReference type="Gene3D" id="2.30.250.10">
    <property type="entry name" value="Aminopeptidase i, Domain 2"/>
    <property type="match status" value="1"/>
</dbReference>
<dbReference type="Gene3D" id="3.40.630.10">
    <property type="entry name" value="Zn peptidases"/>
    <property type="match status" value="1"/>
</dbReference>
<dbReference type="HAMAP" id="MF_00467">
    <property type="entry name" value="Aminopeptidase_M18_2"/>
    <property type="match status" value="1"/>
</dbReference>
<dbReference type="InterPro" id="IPR022984">
    <property type="entry name" value="M18_aminopeptidase_2"/>
</dbReference>
<dbReference type="InterPro" id="IPR001948">
    <property type="entry name" value="Peptidase_M18"/>
</dbReference>
<dbReference type="InterPro" id="IPR023358">
    <property type="entry name" value="Peptidase_M18_dom2"/>
</dbReference>
<dbReference type="NCBIfam" id="NF002759">
    <property type="entry name" value="PRK02813.1"/>
    <property type="match status" value="1"/>
</dbReference>
<dbReference type="PANTHER" id="PTHR28570">
    <property type="entry name" value="ASPARTYL AMINOPEPTIDASE"/>
    <property type="match status" value="1"/>
</dbReference>
<dbReference type="PANTHER" id="PTHR28570:SF3">
    <property type="entry name" value="ASPARTYL AMINOPEPTIDASE"/>
    <property type="match status" value="1"/>
</dbReference>
<dbReference type="Pfam" id="PF02127">
    <property type="entry name" value="Peptidase_M18"/>
    <property type="match status" value="1"/>
</dbReference>
<dbReference type="PRINTS" id="PR00932">
    <property type="entry name" value="AMINO1PTASE"/>
</dbReference>
<dbReference type="SUPFAM" id="SSF101821">
    <property type="entry name" value="Aminopeptidase/glucanase lid domain"/>
    <property type="match status" value="1"/>
</dbReference>
<dbReference type="SUPFAM" id="SSF53187">
    <property type="entry name" value="Zn-dependent exopeptidases"/>
    <property type="match status" value="1"/>
</dbReference>
<keyword id="KW-0031">Aminopeptidase</keyword>
<keyword id="KW-0378">Hydrolase</keyword>
<keyword id="KW-0479">Metal-binding</keyword>
<keyword id="KW-0482">Metalloprotease</keyword>
<keyword id="KW-0645">Protease</keyword>
<keyword id="KW-0862">Zinc</keyword>
<protein>
    <recommendedName>
        <fullName evidence="1">Probable M18 family aminopeptidase 2</fullName>
        <ecNumber evidence="1">3.4.11.-</ecNumber>
    </recommendedName>
</protein>
<proteinExistence type="inferred from homology"/>
<organism>
    <name type="scientific">Pseudomonas aeruginosa (strain UCBPP-PA14)</name>
    <dbReference type="NCBI Taxonomy" id="208963"/>
    <lineage>
        <taxon>Bacteria</taxon>
        <taxon>Pseudomonadati</taxon>
        <taxon>Pseudomonadota</taxon>
        <taxon>Gammaproteobacteria</taxon>
        <taxon>Pseudomonadales</taxon>
        <taxon>Pseudomonadaceae</taxon>
        <taxon>Pseudomonas</taxon>
    </lineage>
</organism>
<reference key="1">
    <citation type="journal article" date="2006" name="Genome Biol.">
        <title>Genomic analysis reveals that Pseudomonas aeruginosa virulence is combinatorial.</title>
        <authorList>
            <person name="Lee D.G."/>
            <person name="Urbach J.M."/>
            <person name="Wu G."/>
            <person name="Liberati N.T."/>
            <person name="Feinbaum R.L."/>
            <person name="Miyata S."/>
            <person name="Diggins L.T."/>
            <person name="He J."/>
            <person name="Saucier M."/>
            <person name="Deziel E."/>
            <person name="Friedman L."/>
            <person name="Li L."/>
            <person name="Grills G."/>
            <person name="Montgomery K."/>
            <person name="Kucherlapati R."/>
            <person name="Rahme L.G."/>
            <person name="Ausubel F.M."/>
        </authorList>
    </citation>
    <scope>NUCLEOTIDE SEQUENCE [LARGE SCALE GENOMIC DNA]</scope>
    <source>
        <strain>UCBPP-PA14</strain>
    </source>
</reference>
<gene>
    <name evidence="1" type="primary">apeB</name>
    <name type="ordered locus">PA14_21990</name>
</gene>
<comment type="cofactor">
    <cofactor evidence="1">
        <name>Zn(2+)</name>
        <dbReference type="ChEBI" id="CHEBI:29105"/>
    </cofactor>
</comment>
<comment type="similarity">
    <text evidence="1">Belongs to the peptidase M18 family.</text>
</comment>
<accession>Q02Q78</accession>
<feature type="chain" id="PRO_1000013702" description="Probable M18 family aminopeptidase 2">
    <location>
        <begin position="1"/>
        <end position="429"/>
    </location>
</feature>
<feature type="binding site" evidence="1">
    <location>
        <position position="82"/>
    </location>
    <ligand>
        <name>Zn(2+)</name>
        <dbReference type="ChEBI" id="CHEBI:29105"/>
    </ligand>
</feature>
<feature type="binding site" evidence="1">
    <location>
        <position position="156"/>
    </location>
    <ligand>
        <name>Zn(2+)</name>
        <dbReference type="ChEBI" id="CHEBI:29105"/>
    </ligand>
</feature>
<feature type="binding site" evidence="1">
    <location>
        <position position="401"/>
    </location>
    <ligand>
        <name>Zn(2+)</name>
        <dbReference type="ChEBI" id="CHEBI:29105"/>
    </ligand>
</feature>
<sequence length="429" mass="46601">MRAELNQGLIDFLKASPTPFHATASLARRLEAAGYRRLDERDAWHTEAGGRYYVTRNDSSLIAIRLGRRSPLESGFRLVGAHTDSPCLRVKPNPEIARNGFLQLGVEVYGGALFAPWFDRDLSLAGRVTFRANGKLESRLVDFRKAIAVIPNLAIHLNRAANEGWPINAQNELPPIIAQLAPGEAADFRLLLDEQLLREHGITADVVLDYELSFYDTQSAAVVGLNDEFIAGARLDNLLSCHAGLEALLNAEGDENCILVCTDHEEVGSCSHCGADGPFLEQVLRRLLPEGDAFSRAIQRSLLVSADNAHGVHPNYADKHDANHGPALNGGPVIKINSNQRYATNSETAGFFRHLCQDSEVPVQSFVTRSDMGCGSTIGPITASQVGVRTVDIGLPTFAMHSIRELAGSHDLAHLVKVLGAFYASSELP</sequence>
<name>APEB_PSEAB</name>
<evidence type="ECO:0000255" key="1">
    <source>
        <dbReference type="HAMAP-Rule" id="MF_00467"/>
    </source>
</evidence>